<comment type="function">
    <text evidence="1">Involved in DNA repair and RecF pathway recombination.</text>
</comment>
<comment type="similarity">
    <text evidence="1">Belongs to the RecO family.</text>
</comment>
<dbReference type="EMBL" id="CP001322">
    <property type="protein sequence ID" value="ACL01756.1"/>
    <property type="molecule type" value="Genomic_DNA"/>
</dbReference>
<dbReference type="SMR" id="B8FKE1"/>
<dbReference type="KEGG" id="dal:Dalk_0046"/>
<dbReference type="eggNOG" id="COG1381">
    <property type="taxonomic scope" value="Bacteria"/>
</dbReference>
<dbReference type="HOGENOM" id="CLU_066632_2_1_7"/>
<dbReference type="Proteomes" id="UP000000739">
    <property type="component" value="Chromosome"/>
</dbReference>
<dbReference type="GO" id="GO:0043590">
    <property type="term" value="C:bacterial nucleoid"/>
    <property type="evidence" value="ECO:0007669"/>
    <property type="project" value="TreeGrafter"/>
</dbReference>
<dbReference type="GO" id="GO:0006310">
    <property type="term" value="P:DNA recombination"/>
    <property type="evidence" value="ECO:0007669"/>
    <property type="project" value="UniProtKB-UniRule"/>
</dbReference>
<dbReference type="GO" id="GO:0006302">
    <property type="term" value="P:double-strand break repair"/>
    <property type="evidence" value="ECO:0007669"/>
    <property type="project" value="TreeGrafter"/>
</dbReference>
<dbReference type="Gene3D" id="2.40.50.140">
    <property type="entry name" value="Nucleic acid-binding proteins"/>
    <property type="match status" value="1"/>
</dbReference>
<dbReference type="Gene3D" id="1.20.1440.120">
    <property type="entry name" value="Recombination protein O, C-terminal domain"/>
    <property type="match status" value="1"/>
</dbReference>
<dbReference type="HAMAP" id="MF_00201">
    <property type="entry name" value="RecO"/>
    <property type="match status" value="1"/>
</dbReference>
<dbReference type="InterPro" id="IPR037278">
    <property type="entry name" value="ARFGAP/RecO"/>
</dbReference>
<dbReference type="InterPro" id="IPR022572">
    <property type="entry name" value="DNA_rep/recomb_RecO_N"/>
</dbReference>
<dbReference type="InterPro" id="IPR012340">
    <property type="entry name" value="NA-bd_OB-fold"/>
</dbReference>
<dbReference type="InterPro" id="IPR003717">
    <property type="entry name" value="RecO"/>
</dbReference>
<dbReference type="InterPro" id="IPR042242">
    <property type="entry name" value="RecO_C"/>
</dbReference>
<dbReference type="NCBIfam" id="TIGR00613">
    <property type="entry name" value="reco"/>
    <property type="match status" value="1"/>
</dbReference>
<dbReference type="PANTHER" id="PTHR33991">
    <property type="entry name" value="DNA REPAIR PROTEIN RECO"/>
    <property type="match status" value="1"/>
</dbReference>
<dbReference type="PANTHER" id="PTHR33991:SF1">
    <property type="entry name" value="DNA REPAIR PROTEIN RECO"/>
    <property type="match status" value="1"/>
</dbReference>
<dbReference type="Pfam" id="PF02565">
    <property type="entry name" value="RecO_C"/>
    <property type="match status" value="1"/>
</dbReference>
<dbReference type="Pfam" id="PF11967">
    <property type="entry name" value="RecO_N"/>
    <property type="match status" value="1"/>
</dbReference>
<dbReference type="SUPFAM" id="SSF57863">
    <property type="entry name" value="ArfGap/RecO-like zinc finger"/>
    <property type="match status" value="1"/>
</dbReference>
<dbReference type="SUPFAM" id="SSF50249">
    <property type="entry name" value="Nucleic acid-binding proteins"/>
    <property type="match status" value="1"/>
</dbReference>
<gene>
    <name evidence="1" type="primary">recO</name>
    <name type="ordered locus">Dalk_0046</name>
</gene>
<protein>
    <recommendedName>
        <fullName evidence="1">DNA repair protein RecO</fullName>
    </recommendedName>
    <alternativeName>
        <fullName evidence="1">Recombination protein O</fullName>
    </alternativeName>
</protein>
<reference key="1">
    <citation type="journal article" date="2012" name="Environ. Microbiol.">
        <title>The genome sequence of Desulfatibacillum alkenivorans AK-01: a blueprint for anaerobic alkane oxidation.</title>
        <authorList>
            <person name="Callaghan A.V."/>
            <person name="Morris B.E."/>
            <person name="Pereira I.A."/>
            <person name="McInerney M.J."/>
            <person name="Austin R.N."/>
            <person name="Groves J.T."/>
            <person name="Kukor J.J."/>
            <person name="Suflita J.M."/>
            <person name="Young L.Y."/>
            <person name="Zylstra G.J."/>
            <person name="Wawrik B."/>
        </authorList>
    </citation>
    <scope>NUCLEOTIDE SEQUENCE [LARGE SCALE GENOMIC DNA]</scope>
    <source>
        <strain>AK-01</strain>
    </source>
</reference>
<organism>
    <name type="scientific">Desulfatibacillum aliphaticivorans</name>
    <dbReference type="NCBI Taxonomy" id="218208"/>
    <lineage>
        <taxon>Bacteria</taxon>
        <taxon>Pseudomonadati</taxon>
        <taxon>Thermodesulfobacteriota</taxon>
        <taxon>Desulfobacteria</taxon>
        <taxon>Desulfobacterales</taxon>
        <taxon>Desulfatibacillaceae</taxon>
        <taxon>Desulfatibacillum</taxon>
    </lineage>
</organism>
<sequence>MPPVTTSAVILRSIEYGDFDLIVTFFTQAQGKRAALAKNARKSFKRFGGALELFSKVSIVYAHGKKKGGLPLLSESNLEQHFSNIRMDIHKTALASLWAETIYSWAEEEHAQEEIFQLLIRSLENLDNEKVDRDKVNILFLLRFLALAGLSPSLDQCVLCCRSLEDWGQGGICFDHARGGIVCPKCGVCLAPGPVLSVGAVKQLLWLNKGDLAAAGRMKLSREAMDRGRDLLESFLAYHLGKEPKSLRFLKDLRRRHF</sequence>
<name>RECO_DESAL</name>
<proteinExistence type="inferred from homology"/>
<evidence type="ECO:0000255" key="1">
    <source>
        <dbReference type="HAMAP-Rule" id="MF_00201"/>
    </source>
</evidence>
<keyword id="KW-0227">DNA damage</keyword>
<keyword id="KW-0233">DNA recombination</keyword>
<keyword id="KW-0234">DNA repair</keyword>
<keyword id="KW-1185">Reference proteome</keyword>
<accession>B8FKE1</accession>
<feature type="chain" id="PRO_1000118714" description="DNA repair protein RecO">
    <location>
        <begin position="1"/>
        <end position="258"/>
    </location>
</feature>